<reference key="1">
    <citation type="journal article" date="2005" name="BMC Genomics">
        <title>Characterization of 954 bovine full-CDS cDNA sequences.</title>
        <authorList>
            <person name="Harhay G.P."/>
            <person name="Sonstegard T.S."/>
            <person name="Keele J.W."/>
            <person name="Heaton M.P."/>
            <person name="Clawson M.L."/>
            <person name="Snelling W.M."/>
            <person name="Wiedmann R.T."/>
            <person name="Van Tassell C.P."/>
            <person name="Smith T.P.L."/>
        </authorList>
    </citation>
    <scope>NUCLEOTIDE SEQUENCE [LARGE SCALE MRNA]</scope>
</reference>
<reference key="2">
    <citation type="submission" date="2007-07" db="EMBL/GenBank/DDBJ databases">
        <authorList>
            <consortium name="NIH - Mammalian Gene Collection (MGC) project"/>
        </authorList>
    </citation>
    <scope>NUCLEOTIDE SEQUENCE [LARGE SCALE MRNA]</scope>
    <source>
        <strain>Hereford</strain>
        <tissue>Fetal medulla</tissue>
    </source>
</reference>
<reference key="3">
    <citation type="journal article" date="2009" name="Mol. Cell. Proteomics">
        <title>Affinity enrichment and characterization of mucin core-1 type glycopeptides from bovine serum.</title>
        <authorList>
            <person name="Darula Z."/>
            <person name="Medzihradszky K.F."/>
        </authorList>
    </citation>
    <scope>GLYCOSYLATION AT THR-504</scope>
    <scope>IDENTIFICATION BY MASS SPECTROMETRY</scope>
</reference>
<organism>
    <name type="scientific">Bos taurus</name>
    <name type="common">Bovine</name>
    <dbReference type="NCBI Taxonomy" id="9913"/>
    <lineage>
        <taxon>Eukaryota</taxon>
        <taxon>Metazoa</taxon>
        <taxon>Chordata</taxon>
        <taxon>Craniata</taxon>
        <taxon>Vertebrata</taxon>
        <taxon>Euteleostomi</taxon>
        <taxon>Mammalia</taxon>
        <taxon>Eutheria</taxon>
        <taxon>Laurasiatheria</taxon>
        <taxon>Artiodactyla</taxon>
        <taxon>Ruminantia</taxon>
        <taxon>Pecora</taxon>
        <taxon>Bovidae</taxon>
        <taxon>Bovinae</taxon>
        <taxon>Bos</taxon>
    </lineage>
</organism>
<keyword id="KW-1003">Cell membrane</keyword>
<keyword id="KW-0325">Glycoprotein</keyword>
<keyword id="KW-0336">GPI-anchor</keyword>
<keyword id="KW-0378">Hydrolase</keyword>
<keyword id="KW-0449">Lipoprotein</keyword>
<keyword id="KW-0472">Membrane</keyword>
<keyword id="KW-1185">Reference proteome</keyword>
<keyword id="KW-0732">Signal</keyword>
<sequence length="510" mass="56947">MIMSQLLNYVAVLFFCVSRASSLDTFIAAVYEHAVILPNATLVPVSPEEALAVMNRNLDLLEGAVTSASKQGAHIIVTPEDGIYGFNFTRESIYPYLEDIPDPQVNWIPCNNPDRFGHTPVQQRLSCLAKDNSIYIVANIGDKKSCNASDPQCPPDGRYQYNTDVVFDSKGKLVARYHKQNLFLNEDQFNAPKEPEVVTFNTTFGKFGIFTCFDILFHDPAVTLVRDSHVDTILFPTAWMNVLPHLSAIEFHSAWAMGMRVNFLASNLHYPLKKMTGSGIYAPDSPRAFHYDMKTEEGKLLLAQLDSHPHPTPVVNWTSYASGVEAHSVGNQEFTGIIFFDEFTFLELKEIGGNYTVCQRDLCCHLSYKMSEKRSDEVYALGAFDGLHTVEGSYYLQICTLLKCKTTDLHTCGDSVETASTRFEMFSLSGTFGTQYVFPEVLLSEIQLAPGEFQVSNDGRLFSLKPTSGPVLTVTLFGRLYEKDSAPNTLSDLTTQALRLNPKTDAWKSK</sequence>
<dbReference type="EC" id="3.5.1.92" evidence="1"/>
<dbReference type="EMBL" id="BT021888">
    <property type="protein sequence ID" value="AAX46735.1"/>
    <property type="molecule type" value="mRNA"/>
</dbReference>
<dbReference type="EMBL" id="BC149325">
    <property type="protein sequence ID" value="AAI49326.1"/>
    <property type="molecule type" value="mRNA"/>
</dbReference>
<dbReference type="RefSeq" id="NP_001019727.2">
    <property type="nucleotide sequence ID" value="NM_001024556.2"/>
</dbReference>
<dbReference type="SMR" id="Q58CQ9"/>
<dbReference type="FunCoup" id="Q58CQ9">
    <property type="interactions" value="6"/>
</dbReference>
<dbReference type="STRING" id="9913.ENSBTAP00000020086"/>
<dbReference type="GlyConnect" id="772">
    <property type="glycosylation" value="1 O-Linked glycan (1 site)"/>
</dbReference>
<dbReference type="GlyCosmos" id="Q58CQ9">
    <property type="glycosylation" value="7 sites, 1 glycan"/>
</dbReference>
<dbReference type="GlyGen" id="Q58CQ9">
    <property type="glycosylation" value="7 sites, 1 O-linked glycan (1 site)"/>
</dbReference>
<dbReference type="iPTMnet" id="Q58CQ9"/>
<dbReference type="PaxDb" id="9913-ENSBTAP00000020086"/>
<dbReference type="GeneID" id="526704"/>
<dbReference type="KEGG" id="bta:526704"/>
<dbReference type="CTD" id="8876"/>
<dbReference type="eggNOG" id="KOG0806">
    <property type="taxonomic scope" value="Eukaryota"/>
</dbReference>
<dbReference type="HOGENOM" id="CLU_033209_2_0_1"/>
<dbReference type="InParanoid" id="Q58CQ9"/>
<dbReference type="OrthoDB" id="10250282at2759"/>
<dbReference type="TreeFam" id="TF323645"/>
<dbReference type="Proteomes" id="UP000009136">
    <property type="component" value="Unplaced"/>
</dbReference>
<dbReference type="GO" id="GO:0005886">
    <property type="term" value="C:plasma membrane"/>
    <property type="evidence" value="ECO:0007669"/>
    <property type="project" value="UniProtKB-SubCell"/>
</dbReference>
<dbReference type="GO" id="GO:0098552">
    <property type="term" value="C:side of membrane"/>
    <property type="evidence" value="ECO:0007669"/>
    <property type="project" value="UniProtKB-KW"/>
</dbReference>
<dbReference type="GO" id="GO:0017159">
    <property type="term" value="F:pantetheine hydrolase activity"/>
    <property type="evidence" value="ECO:0000250"/>
    <property type="project" value="UniProtKB"/>
</dbReference>
<dbReference type="GO" id="GO:0015939">
    <property type="term" value="P:pantothenate metabolic process"/>
    <property type="evidence" value="ECO:0000250"/>
    <property type="project" value="UniProtKB"/>
</dbReference>
<dbReference type="CDD" id="cd07567">
    <property type="entry name" value="biotinidase_like"/>
    <property type="match status" value="1"/>
</dbReference>
<dbReference type="FunFam" id="3.60.110.10:FF:000001">
    <property type="entry name" value="biotinidase isoform X1"/>
    <property type="match status" value="1"/>
</dbReference>
<dbReference type="Gene3D" id="3.60.110.10">
    <property type="entry name" value="Carbon-nitrogen hydrolase"/>
    <property type="match status" value="1"/>
</dbReference>
<dbReference type="InterPro" id="IPR012101">
    <property type="entry name" value="Biotinidase-like_euk"/>
</dbReference>
<dbReference type="InterPro" id="IPR040154">
    <property type="entry name" value="Biotinidase/VNN"/>
</dbReference>
<dbReference type="InterPro" id="IPR003010">
    <property type="entry name" value="C-N_Hydrolase"/>
</dbReference>
<dbReference type="InterPro" id="IPR036526">
    <property type="entry name" value="C-N_Hydrolase_sf"/>
</dbReference>
<dbReference type="InterPro" id="IPR043957">
    <property type="entry name" value="Vanin_C"/>
</dbReference>
<dbReference type="PANTHER" id="PTHR10609">
    <property type="entry name" value="BIOTINIDASE-RELATED"/>
    <property type="match status" value="1"/>
</dbReference>
<dbReference type="PANTHER" id="PTHR10609:SF16">
    <property type="entry name" value="PANTETHEINASE"/>
    <property type="match status" value="1"/>
</dbReference>
<dbReference type="Pfam" id="PF00795">
    <property type="entry name" value="CN_hydrolase"/>
    <property type="match status" value="1"/>
</dbReference>
<dbReference type="Pfam" id="PF19018">
    <property type="entry name" value="Vanin_C"/>
    <property type="match status" value="1"/>
</dbReference>
<dbReference type="PIRSF" id="PIRSF011861">
    <property type="entry name" value="Biotinidase"/>
    <property type="match status" value="1"/>
</dbReference>
<dbReference type="SUPFAM" id="SSF56317">
    <property type="entry name" value="Carbon-nitrogen hydrolase"/>
    <property type="match status" value="1"/>
</dbReference>
<dbReference type="PROSITE" id="PS50263">
    <property type="entry name" value="CN_HYDROLASE"/>
    <property type="match status" value="1"/>
</dbReference>
<gene>
    <name type="primary">VNN1</name>
</gene>
<accession>Q58CQ9</accession>
<accession>A6QPH4</accession>
<protein>
    <recommendedName>
        <fullName>Pantetheinase</fullName>
        <ecNumber evidence="1">3.5.1.92</ecNumber>
    </recommendedName>
    <alternativeName>
        <fullName>Pantetheine hydrolase</fullName>
    </alternativeName>
    <alternativeName>
        <fullName>Vascular non-inflammatory molecule 1</fullName>
        <shortName>Vanin-1</shortName>
    </alternativeName>
</protein>
<comment type="function">
    <text evidence="1">Amidohydrolase that hydrolyzes specifically one of the carboamide linkages in D-pantetheine thus recycling pantothenic acid (vitamin B5) and releasing cysteamine.</text>
</comment>
<comment type="catalytic activity">
    <reaction evidence="1">
        <text>(R)-pantetheine + H2O = cysteamine + (R)-pantothenate</text>
        <dbReference type="Rhea" id="RHEA:13445"/>
        <dbReference type="ChEBI" id="CHEBI:15377"/>
        <dbReference type="ChEBI" id="CHEBI:16753"/>
        <dbReference type="ChEBI" id="CHEBI:29032"/>
        <dbReference type="ChEBI" id="CHEBI:58029"/>
        <dbReference type="EC" id="3.5.1.92"/>
    </reaction>
</comment>
<comment type="subunit">
    <text evidence="1">Monomer.</text>
</comment>
<comment type="subcellular location">
    <subcellularLocation>
        <location evidence="5">Cell membrane</location>
        <topology evidence="5">Lipid-anchor</topology>
        <topology evidence="5">GPI-anchor</topology>
    </subcellularLocation>
</comment>
<comment type="similarity">
    <text evidence="5">Belongs to the carbon-nitrogen hydrolase superfamily. BTD/VNN family.</text>
</comment>
<name>VNN1_BOVIN</name>
<proteinExistence type="evidence at protein level"/>
<feature type="signal peptide" evidence="2">
    <location>
        <begin position="1"/>
        <end position="22"/>
    </location>
</feature>
<feature type="chain" id="PRO_0000239702" description="Pantetheinase">
    <location>
        <begin position="23"/>
        <end position="492"/>
    </location>
</feature>
<feature type="propeptide" id="PRO_0000239703" description="Removed in mature form" evidence="2">
    <location>
        <begin position="493"/>
        <end position="510"/>
    </location>
</feature>
<feature type="domain" description="CN hydrolase" evidence="3">
    <location>
        <begin position="31"/>
        <end position="307"/>
    </location>
</feature>
<feature type="active site" description="Proton acceptor" evidence="3">
    <location>
        <position position="80"/>
    </location>
</feature>
<feature type="active site" description="Proton donor" evidence="3">
    <location>
        <position position="179"/>
    </location>
</feature>
<feature type="active site" description="Nucleophile" evidence="3">
    <location>
        <position position="212"/>
    </location>
</feature>
<feature type="lipid moiety-binding region" description="GPI-anchor amidated aspartate" evidence="2">
    <location>
        <position position="492"/>
    </location>
</feature>
<feature type="glycosylation site" description="N-linked (GlcNAc...) asparagine" evidence="2">
    <location>
        <position position="39"/>
    </location>
</feature>
<feature type="glycosylation site" description="N-linked (GlcNAc...) asparagine" evidence="2">
    <location>
        <position position="87"/>
    </location>
</feature>
<feature type="glycosylation site" description="N-linked (GlcNAc...) asparagine" evidence="2">
    <location>
        <position position="147"/>
    </location>
</feature>
<feature type="glycosylation site" description="N-linked (GlcNAc...) asparagine" evidence="2">
    <location>
        <position position="201"/>
    </location>
</feature>
<feature type="glycosylation site" description="N-linked (GlcNAc...) asparagine" evidence="2">
    <location>
        <position position="316"/>
    </location>
</feature>
<feature type="glycosylation site" description="N-linked (GlcNAc...) asparagine" evidence="2">
    <location>
        <position position="354"/>
    </location>
</feature>
<feature type="glycosylation site" description="O-linked (GalNAc...) threonine" evidence="4">
    <location>
        <position position="504"/>
    </location>
</feature>
<feature type="sequence conflict" description="In Ref. 2; AAI49326." evidence="5" ref="2">
    <original>S</original>
    <variation>T</variation>
    <location>
        <position position="169"/>
    </location>
</feature>
<feature type="sequence conflict" description="In Ref. 2; AAI49326." evidence="5" ref="2">
    <original>H</original>
    <variation>R</variation>
    <location>
        <position position="229"/>
    </location>
</feature>
<evidence type="ECO:0000250" key="1">
    <source>
        <dbReference type="UniProtKB" id="O95497"/>
    </source>
</evidence>
<evidence type="ECO:0000255" key="2"/>
<evidence type="ECO:0000255" key="3">
    <source>
        <dbReference type="PROSITE-ProRule" id="PRU00054"/>
    </source>
</evidence>
<evidence type="ECO:0000269" key="4">
    <source>
    </source>
</evidence>
<evidence type="ECO:0000305" key="5"/>